<reference key="1">
    <citation type="journal article" date="2006" name="PLoS Genet.">
        <title>Genome sequence of Rickettsia bellii illuminates the role of amoebae in gene exchanges between intracellular pathogens.</title>
        <authorList>
            <person name="Ogata H."/>
            <person name="La Scola B."/>
            <person name="Audic S."/>
            <person name="Renesto P."/>
            <person name="Blanc G."/>
            <person name="Robert C."/>
            <person name="Fournier P.-E."/>
            <person name="Claverie J.-M."/>
            <person name="Raoult D."/>
        </authorList>
    </citation>
    <scope>NUCLEOTIDE SEQUENCE [LARGE SCALE GENOMIC DNA]</scope>
    <source>
        <strain>RML369-C</strain>
    </source>
</reference>
<dbReference type="EC" id="6.1.1.4" evidence="1"/>
<dbReference type="EMBL" id="CP000087">
    <property type="protein sequence ID" value="ABE04392.1"/>
    <property type="molecule type" value="Genomic_DNA"/>
</dbReference>
<dbReference type="RefSeq" id="WP_011477003.1">
    <property type="nucleotide sequence ID" value="NC_007940.1"/>
</dbReference>
<dbReference type="SMR" id="Q1RJS2"/>
<dbReference type="KEGG" id="rbe:RBE_0311"/>
<dbReference type="eggNOG" id="COG0495">
    <property type="taxonomic scope" value="Bacteria"/>
</dbReference>
<dbReference type="HOGENOM" id="CLU_004427_0_0_5"/>
<dbReference type="OrthoDB" id="9810365at2"/>
<dbReference type="Proteomes" id="UP000001951">
    <property type="component" value="Chromosome"/>
</dbReference>
<dbReference type="GO" id="GO:0005737">
    <property type="term" value="C:cytoplasm"/>
    <property type="evidence" value="ECO:0007669"/>
    <property type="project" value="UniProtKB-SubCell"/>
</dbReference>
<dbReference type="GO" id="GO:0002161">
    <property type="term" value="F:aminoacyl-tRNA deacylase activity"/>
    <property type="evidence" value="ECO:0007669"/>
    <property type="project" value="InterPro"/>
</dbReference>
<dbReference type="GO" id="GO:0005524">
    <property type="term" value="F:ATP binding"/>
    <property type="evidence" value="ECO:0007669"/>
    <property type="project" value="UniProtKB-UniRule"/>
</dbReference>
<dbReference type="GO" id="GO:0004823">
    <property type="term" value="F:leucine-tRNA ligase activity"/>
    <property type="evidence" value="ECO:0007669"/>
    <property type="project" value="UniProtKB-UniRule"/>
</dbReference>
<dbReference type="GO" id="GO:0006429">
    <property type="term" value="P:leucyl-tRNA aminoacylation"/>
    <property type="evidence" value="ECO:0007669"/>
    <property type="project" value="UniProtKB-UniRule"/>
</dbReference>
<dbReference type="CDD" id="cd07958">
    <property type="entry name" value="Anticodon_Ia_Leu_BEm"/>
    <property type="match status" value="1"/>
</dbReference>
<dbReference type="CDD" id="cd00812">
    <property type="entry name" value="LeuRS_core"/>
    <property type="match status" value="1"/>
</dbReference>
<dbReference type="FunFam" id="1.10.730.10:FF:000002">
    <property type="entry name" value="Leucine--tRNA ligase"/>
    <property type="match status" value="1"/>
</dbReference>
<dbReference type="FunFam" id="3.10.20.590:FF:000001">
    <property type="entry name" value="Leucine--tRNA ligase"/>
    <property type="match status" value="1"/>
</dbReference>
<dbReference type="FunFam" id="3.40.50.620:FF:000003">
    <property type="entry name" value="Leucine--tRNA ligase"/>
    <property type="match status" value="1"/>
</dbReference>
<dbReference type="FunFam" id="3.40.50.620:FF:000051">
    <property type="entry name" value="Leucine--tRNA ligase"/>
    <property type="match status" value="1"/>
</dbReference>
<dbReference type="Gene3D" id="2.20.28.290">
    <property type="match status" value="1"/>
</dbReference>
<dbReference type="Gene3D" id="3.10.20.590">
    <property type="match status" value="1"/>
</dbReference>
<dbReference type="Gene3D" id="3.40.50.620">
    <property type="entry name" value="HUPs"/>
    <property type="match status" value="2"/>
</dbReference>
<dbReference type="Gene3D" id="1.10.730.10">
    <property type="entry name" value="Isoleucyl-tRNA Synthetase, Domain 1"/>
    <property type="match status" value="1"/>
</dbReference>
<dbReference type="HAMAP" id="MF_00049_B">
    <property type="entry name" value="Leu_tRNA_synth_B"/>
    <property type="match status" value="1"/>
</dbReference>
<dbReference type="InterPro" id="IPR001412">
    <property type="entry name" value="aa-tRNA-synth_I_CS"/>
</dbReference>
<dbReference type="InterPro" id="IPR002300">
    <property type="entry name" value="aa-tRNA-synth_Ia"/>
</dbReference>
<dbReference type="InterPro" id="IPR002302">
    <property type="entry name" value="Leu-tRNA-ligase"/>
</dbReference>
<dbReference type="InterPro" id="IPR025709">
    <property type="entry name" value="Leu_tRNA-synth_edit"/>
</dbReference>
<dbReference type="InterPro" id="IPR013155">
    <property type="entry name" value="M/V/L/I-tRNA-synth_anticd-bd"/>
</dbReference>
<dbReference type="InterPro" id="IPR015413">
    <property type="entry name" value="Methionyl/Leucyl_tRNA_Synth"/>
</dbReference>
<dbReference type="InterPro" id="IPR014729">
    <property type="entry name" value="Rossmann-like_a/b/a_fold"/>
</dbReference>
<dbReference type="InterPro" id="IPR009080">
    <property type="entry name" value="tRNAsynth_Ia_anticodon-bd"/>
</dbReference>
<dbReference type="InterPro" id="IPR009008">
    <property type="entry name" value="Val/Leu/Ile-tRNA-synth_edit"/>
</dbReference>
<dbReference type="NCBIfam" id="TIGR00396">
    <property type="entry name" value="leuS_bact"/>
    <property type="match status" value="1"/>
</dbReference>
<dbReference type="PANTHER" id="PTHR43740:SF2">
    <property type="entry name" value="LEUCINE--TRNA LIGASE, MITOCHONDRIAL"/>
    <property type="match status" value="1"/>
</dbReference>
<dbReference type="PANTHER" id="PTHR43740">
    <property type="entry name" value="LEUCYL-TRNA SYNTHETASE"/>
    <property type="match status" value="1"/>
</dbReference>
<dbReference type="Pfam" id="PF08264">
    <property type="entry name" value="Anticodon_1"/>
    <property type="match status" value="1"/>
</dbReference>
<dbReference type="Pfam" id="PF00133">
    <property type="entry name" value="tRNA-synt_1"/>
    <property type="match status" value="2"/>
</dbReference>
<dbReference type="Pfam" id="PF13603">
    <property type="entry name" value="tRNA-synt_1_2"/>
    <property type="match status" value="1"/>
</dbReference>
<dbReference type="Pfam" id="PF09334">
    <property type="entry name" value="tRNA-synt_1g"/>
    <property type="match status" value="1"/>
</dbReference>
<dbReference type="PRINTS" id="PR00985">
    <property type="entry name" value="TRNASYNTHLEU"/>
</dbReference>
<dbReference type="SUPFAM" id="SSF47323">
    <property type="entry name" value="Anticodon-binding domain of a subclass of class I aminoacyl-tRNA synthetases"/>
    <property type="match status" value="1"/>
</dbReference>
<dbReference type="SUPFAM" id="SSF52374">
    <property type="entry name" value="Nucleotidylyl transferase"/>
    <property type="match status" value="1"/>
</dbReference>
<dbReference type="SUPFAM" id="SSF50677">
    <property type="entry name" value="ValRS/IleRS/LeuRS editing domain"/>
    <property type="match status" value="1"/>
</dbReference>
<dbReference type="PROSITE" id="PS00178">
    <property type="entry name" value="AA_TRNA_LIGASE_I"/>
    <property type="match status" value="1"/>
</dbReference>
<name>SYL_RICBR</name>
<proteinExistence type="inferred from homology"/>
<comment type="catalytic activity">
    <reaction evidence="1">
        <text>tRNA(Leu) + L-leucine + ATP = L-leucyl-tRNA(Leu) + AMP + diphosphate</text>
        <dbReference type="Rhea" id="RHEA:11688"/>
        <dbReference type="Rhea" id="RHEA-COMP:9613"/>
        <dbReference type="Rhea" id="RHEA-COMP:9622"/>
        <dbReference type="ChEBI" id="CHEBI:30616"/>
        <dbReference type="ChEBI" id="CHEBI:33019"/>
        <dbReference type="ChEBI" id="CHEBI:57427"/>
        <dbReference type="ChEBI" id="CHEBI:78442"/>
        <dbReference type="ChEBI" id="CHEBI:78494"/>
        <dbReference type="ChEBI" id="CHEBI:456215"/>
        <dbReference type="EC" id="6.1.1.4"/>
    </reaction>
</comment>
<comment type="subcellular location">
    <subcellularLocation>
        <location evidence="1">Cytoplasm</location>
    </subcellularLocation>
</comment>
<comment type="similarity">
    <text evidence="1">Belongs to the class-I aminoacyl-tRNA synthetase family.</text>
</comment>
<feature type="chain" id="PRO_0000277915" description="Leucine--tRNA ligase">
    <location>
        <begin position="1"/>
        <end position="831"/>
    </location>
</feature>
<feature type="short sequence motif" description="'HIGH' region">
    <location>
        <begin position="35"/>
        <end position="45"/>
    </location>
</feature>
<feature type="short sequence motif" description="'KMSKS' region">
    <location>
        <begin position="600"/>
        <end position="604"/>
    </location>
</feature>
<feature type="binding site" evidence="1">
    <location>
        <position position="603"/>
    </location>
    <ligand>
        <name>ATP</name>
        <dbReference type="ChEBI" id="CHEBI:30616"/>
    </ligand>
</feature>
<keyword id="KW-0030">Aminoacyl-tRNA synthetase</keyword>
<keyword id="KW-0067">ATP-binding</keyword>
<keyword id="KW-0963">Cytoplasm</keyword>
<keyword id="KW-0436">Ligase</keyword>
<keyword id="KW-0547">Nucleotide-binding</keyword>
<keyword id="KW-0648">Protein biosynthesis</keyword>
<sequence length="831" mass="95795">MNIEQKWQQIWQEEKAFEVPNESSKPKYYVLEMLPYPSGKIHVGHVRNYSIGDVVARFMTMQGFNVLHPMGWDSFGLPAENAAIKNNSHPKEWTYSNIENMKKQLKSMGFSYDWSREINSCDPDYYKHEQKFFLELYERNLAYQKESLVNWDPVDNTVLANEQVVDGRGWRSGAIVEKRYLKQWFLKITNYAEELLNEIPNLTEWPEAVRSMQEKWIGKSVGANFRFKIKDNEDVIEVFSTKPETIFGASFVGIAFNHPIIEKLVSKTPEIENFIAKCSNITGSAEFDKAEKEGIFTGLYVVHPFDSNITLPVVITNFVLMDYGTGAVFGCPAHDQRDHELAVKINLPIKQVIEADTDVQKAAYTEDGIIINSGFLNGLSTNEAKQRVIEEFEKLGIGKRTINYRLKDWGISRQRFWGCPIPIIHCDSCGLVPVPDSDLPVTLPDDVKFDGHGNPLDNHPTWKHVNCPKCSKPAIRETDTFDTFFESSWYFTRYCNSQALEMTDKKACDYWLPVDKYIGGIEHAVMHLLYARFFTKVMNEQDYVSVREPFKGLFTQGMVLHATYKDEHNNWLYPEEVIKKGNEFFHKENGGLVTQGRIEKMSKSKKNLIDLETMQQQYGADAIRFFVLSDSPPEKDLEWSASGIEGSARFINKLEQMQETIIKLSDNKNTNKELKRLIHFTIKHVAEDIKHFALNRAIARMRELFNAISSEINKEEIDVQNAKHGFNVLIQLLNPFIPHITEEIWQKLGHKTFLYNAAFPTFDESMLELDTYVIAVQVNGKLRDTYEFNTSASEDEIKQIAINLPKVQKFLEGKEPKKIILVPKKIINIIC</sequence>
<gene>
    <name evidence="1" type="primary">leuS</name>
    <name type="ordered locus">RBE_0311</name>
</gene>
<organism>
    <name type="scientific">Rickettsia bellii (strain RML369-C)</name>
    <dbReference type="NCBI Taxonomy" id="336407"/>
    <lineage>
        <taxon>Bacteria</taxon>
        <taxon>Pseudomonadati</taxon>
        <taxon>Pseudomonadota</taxon>
        <taxon>Alphaproteobacteria</taxon>
        <taxon>Rickettsiales</taxon>
        <taxon>Rickettsiaceae</taxon>
        <taxon>Rickettsieae</taxon>
        <taxon>Rickettsia</taxon>
        <taxon>belli group</taxon>
    </lineage>
</organism>
<protein>
    <recommendedName>
        <fullName evidence="1">Leucine--tRNA ligase</fullName>
        <ecNumber evidence="1">6.1.1.4</ecNumber>
    </recommendedName>
    <alternativeName>
        <fullName evidence="1">Leucyl-tRNA synthetase</fullName>
        <shortName evidence="1">LeuRS</shortName>
    </alternativeName>
</protein>
<accession>Q1RJS2</accession>
<evidence type="ECO:0000255" key="1">
    <source>
        <dbReference type="HAMAP-Rule" id="MF_00049"/>
    </source>
</evidence>